<gene>
    <name evidence="1" type="primary">ctaA</name>
    <name type="ordered locus">SA0964</name>
</gene>
<reference key="1">
    <citation type="journal article" date="2001" name="Lancet">
        <title>Whole genome sequencing of meticillin-resistant Staphylococcus aureus.</title>
        <authorList>
            <person name="Kuroda M."/>
            <person name="Ohta T."/>
            <person name="Uchiyama I."/>
            <person name="Baba T."/>
            <person name="Yuzawa H."/>
            <person name="Kobayashi I."/>
            <person name="Cui L."/>
            <person name="Oguchi A."/>
            <person name="Aoki K."/>
            <person name="Nagai Y."/>
            <person name="Lian J.-Q."/>
            <person name="Ito T."/>
            <person name="Kanamori M."/>
            <person name="Matsumaru H."/>
            <person name="Maruyama A."/>
            <person name="Murakami H."/>
            <person name="Hosoyama A."/>
            <person name="Mizutani-Ui Y."/>
            <person name="Takahashi N.K."/>
            <person name="Sawano T."/>
            <person name="Inoue R."/>
            <person name="Kaito C."/>
            <person name="Sekimizu K."/>
            <person name="Hirakawa H."/>
            <person name="Kuhara S."/>
            <person name="Goto S."/>
            <person name="Yabuzaki J."/>
            <person name="Kanehisa M."/>
            <person name="Yamashita A."/>
            <person name="Oshima K."/>
            <person name="Furuya K."/>
            <person name="Yoshino C."/>
            <person name="Shiba T."/>
            <person name="Hattori M."/>
            <person name="Ogasawara N."/>
            <person name="Hayashi H."/>
            <person name="Hiramatsu K."/>
        </authorList>
    </citation>
    <scope>NUCLEOTIDE SEQUENCE [LARGE SCALE GENOMIC DNA]</scope>
    <source>
        <strain>N315</strain>
    </source>
</reference>
<keyword id="KW-1003">Cell membrane</keyword>
<keyword id="KW-1015">Disulfide bond</keyword>
<keyword id="KW-0350">Heme biosynthesis</keyword>
<keyword id="KW-0408">Iron</keyword>
<keyword id="KW-0472">Membrane</keyword>
<keyword id="KW-0479">Metal-binding</keyword>
<keyword id="KW-0560">Oxidoreductase</keyword>
<keyword id="KW-0812">Transmembrane</keyword>
<keyword id="KW-1133">Transmembrane helix</keyword>
<organism>
    <name type="scientific">Staphylococcus aureus (strain N315)</name>
    <dbReference type="NCBI Taxonomy" id="158879"/>
    <lineage>
        <taxon>Bacteria</taxon>
        <taxon>Bacillati</taxon>
        <taxon>Bacillota</taxon>
        <taxon>Bacilli</taxon>
        <taxon>Bacillales</taxon>
        <taxon>Staphylococcaceae</taxon>
        <taxon>Staphylococcus</taxon>
    </lineage>
</organism>
<accession>Q7A665</accession>
<proteinExistence type="inferred from homology"/>
<evidence type="ECO:0000255" key="1">
    <source>
        <dbReference type="HAMAP-Rule" id="MF_01664"/>
    </source>
</evidence>
<sequence>MFGKKNLKWLGVVATLMMTFVQLGGALVTKTGSADGCGSSWPLCHGALIPEFFPIDTIIELSHRAVSALSLLMVLWLVITAWKHIGYIKEIKPLSIISVGFLLLQALIGAAAVIWQQNDYVLALHFGISLISFSSVFLITLIIFSIDQKYEADELYIKKPLRRLTWLMAIIIYCGVYTGALVRHADASLAYGGWPLPFHDLVPHSEQDWVQLTHRIMAFIVFTIIMITYIHAVKNYPNNRTVHYGYTAAFILVILQVITGALSIMTNVNLIIALFHALFITYLFGMTTYFIMLMLRSVRSDKQ</sequence>
<comment type="function">
    <text evidence="1">Catalyzes the conversion of heme O to heme A by two successive hydroxylations of the methyl group at C8. The first hydroxylation forms heme I, the second hydroxylation results in an unstable dihydroxymethyl group, which spontaneously dehydrates, resulting in the formyl group of heme A.</text>
</comment>
<comment type="catalytic activity">
    <reaction evidence="1">
        <text>Fe(II)-heme o + 2 A + H2O = Fe(II)-heme a + 2 AH2</text>
        <dbReference type="Rhea" id="RHEA:63388"/>
        <dbReference type="ChEBI" id="CHEBI:13193"/>
        <dbReference type="ChEBI" id="CHEBI:15377"/>
        <dbReference type="ChEBI" id="CHEBI:17499"/>
        <dbReference type="ChEBI" id="CHEBI:60530"/>
        <dbReference type="ChEBI" id="CHEBI:61715"/>
        <dbReference type="EC" id="1.17.99.9"/>
    </reaction>
    <physiologicalReaction direction="left-to-right" evidence="1">
        <dbReference type="Rhea" id="RHEA:63389"/>
    </physiologicalReaction>
</comment>
<comment type="cofactor">
    <cofactor evidence="1">
        <name>heme b</name>
        <dbReference type="ChEBI" id="CHEBI:60344"/>
    </cofactor>
</comment>
<comment type="pathway">
    <text evidence="1">Porphyrin-containing compound metabolism; heme A biosynthesis; heme A from heme O: step 1/1.</text>
</comment>
<comment type="subunit">
    <text evidence="1">Interacts with CtaB.</text>
</comment>
<comment type="subcellular location">
    <subcellularLocation>
        <location evidence="1">Cell membrane</location>
        <topology evidence="1">Multi-pass membrane protein</topology>
    </subcellularLocation>
</comment>
<comment type="domain">
    <text evidence="1">The N-half (TM1-TM4) and C-half (TM5-TM8) domains are connected by an intracellular loop. Each domain is formed from four-helix bundles and they align in a pseudo twofold symmetry manner. The N-half domain is the substrate-heme O binding domain and the C-half domain is the cofactor heme B binding domain.</text>
</comment>
<comment type="domain">
    <text evidence="1">The cysteines of disulfide bond Cys-37 and Cys-44 may be involved in transfer of reducing equivalents from quinol in the membrane to the active site of the enzyme.</text>
</comment>
<comment type="similarity">
    <text evidence="1">Belongs to the COX15/CtaA family. Type 1 subfamily.</text>
</comment>
<protein>
    <recommendedName>
        <fullName evidence="1">Heme A synthase</fullName>
        <shortName evidence="1">HAS</shortName>
        <ecNumber evidence="1">1.17.99.9</ecNumber>
    </recommendedName>
    <alternativeName>
        <fullName evidence="1">Cytochrome aa3-controlling protein</fullName>
    </alternativeName>
</protein>
<feature type="chain" id="PRO_0000348996" description="Heme A synthase">
    <location>
        <begin position="1"/>
        <end position="303"/>
    </location>
</feature>
<feature type="topological domain" description="Cytoplasmic" evidence="1">
    <location>
        <begin position="1"/>
        <end position="8"/>
    </location>
</feature>
<feature type="transmembrane region" description="Helical" evidence="1">
    <location>
        <begin position="9"/>
        <end position="29"/>
    </location>
</feature>
<feature type="topological domain" description="Extracellular" evidence="1">
    <location>
        <begin position="30"/>
        <end position="67"/>
    </location>
</feature>
<feature type="transmembrane region" description="Helical" evidence="1">
    <location>
        <begin position="68"/>
        <end position="88"/>
    </location>
</feature>
<feature type="topological domain" description="Cytoplasmic" evidence="1">
    <location>
        <begin position="89"/>
        <end position="93"/>
    </location>
</feature>
<feature type="transmembrane region" description="Helical" evidence="1">
    <location>
        <begin position="94"/>
        <end position="114"/>
    </location>
</feature>
<feature type="topological domain" description="Extracellular" evidence="1">
    <location>
        <begin position="115"/>
        <end position="125"/>
    </location>
</feature>
<feature type="transmembrane region" description="Helical" evidence="1">
    <location>
        <begin position="126"/>
        <end position="146"/>
    </location>
</feature>
<feature type="topological domain" description="Cytoplasmic" evidence="1">
    <location>
        <begin position="147"/>
        <end position="163"/>
    </location>
</feature>
<feature type="transmembrane region" description="Helical" evidence="1">
    <location>
        <begin position="164"/>
        <end position="184"/>
    </location>
</feature>
<feature type="topological domain" description="Extracellular" evidence="1">
    <location>
        <begin position="185"/>
        <end position="215"/>
    </location>
</feature>
<feature type="transmembrane region" description="Helical" evidence="1">
    <location>
        <begin position="216"/>
        <end position="236"/>
    </location>
</feature>
<feature type="topological domain" description="Cytoplasmic" evidence="1">
    <location>
        <begin position="237"/>
        <end position="244"/>
    </location>
</feature>
<feature type="transmembrane region" description="Helical" evidence="1">
    <location>
        <begin position="245"/>
        <end position="265"/>
    </location>
</feature>
<feature type="topological domain" description="Extracellular" evidence="1">
    <location>
        <begin position="266"/>
        <end position="270"/>
    </location>
</feature>
<feature type="transmembrane region" description="Helical" evidence="1">
    <location>
        <begin position="271"/>
        <end position="291"/>
    </location>
</feature>
<feature type="topological domain" description="Cytoplasmic" evidence="1">
    <location>
        <begin position="292"/>
        <end position="303"/>
    </location>
</feature>
<feature type="active site" evidence="1">
    <location>
        <position position="60"/>
    </location>
</feature>
<feature type="binding site" description="axial binding residue" evidence="1">
    <location>
        <position position="63"/>
    </location>
    <ligand>
        <name>heme o</name>
        <dbReference type="ChEBI" id="CHEBI:24480"/>
    </ligand>
    <ligandPart>
        <name>Fe</name>
        <dbReference type="ChEBI" id="CHEBI:18248"/>
    </ligandPart>
</feature>
<feature type="binding site" description="axial binding residue" evidence="1">
    <location>
        <position position="125"/>
    </location>
    <ligand>
        <name>heme o</name>
        <dbReference type="ChEBI" id="CHEBI:24480"/>
    </ligand>
    <ligandPart>
        <name>Fe</name>
        <dbReference type="ChEBI" id="CHEBI:18248"/>
    </ligandPart>
</feature>
<feature type="binding site" description="axial binding residue" evidence="1">
    <location>
        <position position="214"/>
    </location>
    <ligand>
        <name>heme b</name>
        <dbReference type="ChEBI" id="CHEBI:60344"/>
    </ligand>
    <ligandPart>
        <name>Fe</name>
        <dbReference type="ChEBI" id="CHEBI:18248"/>
    </ligandPart>
</feature>
<feature type="binding site" description="axial binding residue" evidence="1">
    <location>
        <position position="276"/>
    </location>
    <ligand>
        <name>heme b</name>
        <dbReference type="ChEBI" id="CHEBI:60344"/>
    </ligand>
    <ligandPart>
        <name>Fe</name>
        <dbReference type="ChEBI" id="CHEBI:18248"/>
    </ligandPart>
</feature>
<feature type="disulfide bond" description="Essential for catalytic activity" evidence="1">
    <location>
        <begin position="37"/>
        <end position="44"/>
    </location>
</feature>
<dbReference type="EC" id="1.17.99.9" evidence="1"/>
<dbReference type="EMBL" id="BA000018">
    <property type="protein sequence ID" value="BAB42212.1"/>
    <property type="molecule type" value="Genomic_DNA"/>
</dbReference>
<dbReference type="RefSeq" id="WP_000467123.1">
    <property type="nucleotide sequence ID" value="NC_002745.2"/>
</dbReference>
<dbReference type="SMR" id="Q7A665"/>
<dbReference type="EnsemblBacteria" id="BAB42212">
    <property type="protein sequence ID" value="BAB42212"/>
    <property type="gene ID" value="BAB42212"/>
</dbReference>
<dbReference type="KEGG" id="sau:SA0964"/>
<dbReference type="HOGENOM" id="CLU_041525_3_1_9"/>
<dbReference type="UniPathway" id="UPA00269">
    <property type="reaction ID" value="UER00713"/>
</dbReference>
<dbReference type="GO" id="GO:0005886">
    <property type="term" value="C:plasma membrane"/>
    <property type="evidence" value="ECO:0007669"/>
    <property type="project" value="UniProtKB-SubCell"/>
</dbReference>
<dbReference type="GO" id="GO:0046872">
    <property type="term" value="F:metal ion binding"/>
    <property type="evidence" value="ECO:0007669"/>
    <property type="project" value="UniProtKB-KW"/>
</dbReference>
<dbReference type="GO" id="GO:0016653">
    <property type="term" value="F:oxidoreductase activity, acting on NAD(P)H, heme protein as acceptor"/>
    <property type="evidence" value="ECO:0007669"/>
    <property type="project" value="InterPro"/>
</dbReference>
<dbReference type="GO" id="GO:0006784">
    <property type="term" value="P:heme A biosynthetic process"/>
    <property type="evidence" value="ECO:0007669"/>
    <property type="project" value="UniProtKB-UniRule"/>
</dbReference>
<dbReference type="HAMAP" id="MF_01664">
    <property type="entry name" value="HemeA_synth_type1"/>
    <property type="match status" value="1"/>
</dbReference>
<dbReference type="InterPro" id="IPR003780">
    <property type="entry name" value="COX15/CtaA_fam"/>
</dbReference>
<dbReference type="InterPro" id="IPR050450">
    <property type="entry name" value="COX15/CtaA_HemeA_synthase"/>
</dbReference>
<dbReference type="InterPro" id="IPR023755">
    <property type="entry name" value="HemeA_Synthase_type1"/>
</dbReference>
<dbReference type="PANTHER" id="PTHR35457">
    <property type="entry name" value="HEME A SYNTHASE"/>
    <property type="match status" value="1"/>
</dbReference>
<dbReference type="PANTHER" id="PTHR35457:SF1">
    <property type="entry name" value="HEME A SYNTHASE"/>
    <property type="match status" value="1"/>
</dbReference>
<dbReference type="Pfam" id="PF02628">
    <property type="entry name" value="COX15-CtaA"/>
    <property type="match status" value="1"/>
</dbReference>
<name>CTAA_STAAN</name>